<keyword id="KW-0324">Glycolysis</keyword>
<keyword id="KW-0456">Lyase</keyword>
<keyword id="KW-0479">Metal-binding</keyword>
<keyword id="KW-0862">Zinc</keyword>
<reference key="1">
    <citation type="journal article" date="2002" name="Dis. Aquat. Organ.">
        <title>Cloning and characterization of Edwardsiella ictaluri proteins expressed and recognized by the channel catfish Ictalurus punctatus immune response during infection.</title>
        <authorList>
            <person name="Moore M.M."/>
            <person name="Fernandez D.L."/>
            <person name="Thune R.L."/>
        </authorList>
    </citation>
    <scope>NUCLEOTIDE SEQUENCE [GENOMIC DNA]</scope>
</reference>
<reference key="2">
    <citation type="submission" date="2009-03" db="EMBL/GenBank/DDBJ databases">
        <title>Complete genome sequence of Edwardsiella ictaluri 93-146.</title>
        <authorList>
            <person name="Williams M.L."/>
            <person name="Gillaspy A.F."/>
            <person name="Dyer D.W."/>
            <person name="Thune R.L."/>
            <person name="Waldbieser G.C."/>
            <person name="Schuster S.C."/>
            <person name="Gipson J."/>
            <person name="Zaitshik J."/>
            <person name="Landry C."/>
            <person name="Lawrence M.L."/>
        </authorList>
    </citation>
    <scope>NUCLEOTIDE SEQUENCE [LARGE SCALE GENOMIC DNA]</scope>
    <source>
        <strain>93-146</strain>
    </source>
</reference>
<accession>O52402</accession>
<accession>C5BAU5</accession>
<gene>
    <name type="primary">fba</name>
    <name type="synonym">fda</name>
    <name type="ordered locus">NT01EI_3367</name>
</gene>
<feature type="chain" id="PRO_0000178715" description="Fructose-bisphosphate aldolase">
    <location>
        <begin position="1"/>
        <end position="358"/>
    </location>
</feature>
<feature type="active site" description="Proton donor" evidence="1">
    <location>
        <position position="109"/>
    </location>
</feature>
<feature type="binding site" evidence="1">
    <location>
        <position position="62"/>
    </location>
    <ligand>
        <name>D-glyceraldehyde 3-phosphate</name>
        <dbReference type="ChEBI" id="CHEBI:59776"/>
    </ligand>
</feature>
<feature type="binding site" evidence="1">
    <location>
        <position position="110"/>
    </location>
    <ligand>
        <name>Zn(2+)</name>
        <dbReference type="ChEBI" id="CHEBI:29105"/>
        <label>1</label>
        <note>catalytic</note>
    </ligand>
</feature>
<feature type="binding site" evidence="1">
    <location>
        <position position="144"/>
    </location>
    <ligand>
        <name>Zn(2+)</name>
        <dbReference type="ChEBI" id="CHEBI:29105"/>
        <label>2</label>
    </ligand>
</feature>
<feature type="binding site" evidence="1">
    <location>
        <position position="174"/>
    </location>
    <ligand>
        <name>Zn(2+)</name>
        <dbReference type="ChEBI" id="CHEBI:29105"/>
        <label>2</label>
    </ligand>
</feature>
<feature type="binding site" evidence="1">
    <location>
        <position position="226"/>
    </location>
    <ligand>
        <name>Zn(2+)</name>
        <dbReference type="ChEBI" id="CHEBI:29105"/>
        <label>1</label>
        <note>catalytic</note>
    </ligand>
</feature>
<feature type="binding site" evidence="1">
    <location>
        <position position="227"/>
    </location>
    <ligand>
        <name>dihydroxyacetone phosphate</name>
        <dbReference type="ChEBI" id="CHEBI:57642"/>
    </ligand>
</feature>
<feature type="binding site" evidence="1">
    <location>
        <position position="264"/>
    </location>
    <ligand>
        <name>Zn(2+)</name>
        <dbReference type="ChEBI" id="CHEBI:29105"/>
        <label>1</label>
        <note>catalytic</note>
    </ligand>
</feature>
<feature type="binding site" evidence="1">
    <location>
        <begin position="265"/>
        <end position="267"/>
    </location>
    <ligand>
        <name>dihydroxyacetone phosphate</name>
        <dbReference type="ChEBI" id="CHEBI:57642"/>
    </ligand>
</feature>
<feature type="binding site" evidence="1">
    <location>
        <begin position="286"/>
        <end position="289"/>
    </location>
    <ligand>
        <name>dihydroxyacetone phosphate</name>
        <dbReference type="ChEBI" id="CHEBI:57642"/>
    </ligand>
</feature>
<feature type="sequence conflict" description="In Ref. 1; AAB92572." evidence="2" ref="1">
    <original>K</original>
    <variation>E</variation>
    <location>
        <position position="20"/>
    </location>
</feature>
<sequence>MSKIFDFVKPGVIFGDDVQKVFQVAKENKFALPAVNCVGTDSINAVMEAAAKVRAPIIVQFSNGGAAFIAGKGLKLEGQQGAILGAIAGAHHVHQMAEYYGVPVILHTDHCAKKLLPWLDGLLDAGEKHFAATGKPLFSSHMIDLSEESLEENIEICSQYLARMSKIGMTLELELGCTGGEEDGVDNSHLDNSALYTQPEDVDYAFTKLSAISPRFTIAASFGNVHGVYKPGNVQLTPVILKNSQEYVSKKHNLPHNSLNFVFHGGSGSTAAEIKEAVSYGVVKMNIDTDTQWATWEGVLKYYKKNEGYLQGQLGNPEGDDKPNKKYYDPRVWLRAAQTGMIERLEQAFKELNCIDVL</sequence>
<protein>
    <recommendedName>
        <fullName>Fructose-bisphosphate aldolase</fullName>
        <shortName>FBP aldolase</shortName>
        <shortName>FBPA</shortName>
        <ecNumber>4.1.2.13</ecNumber>
    </recommendedName>
    <alternativeName>
        <fullName>Fructose-1,6-bisphosphate aldolase</fullName>
    </alternativeName>
</protein>
<organism>
    <name type="scientific">Edwardsiella ictaluri (strain 93-146)</name>
    <dbReference type="NCBI Taxonomy" id="634503"/>
    <lineage>
        <taxon>Bacteria</taxon>
        <taxon>Pseudomonadati</taxon>
        <taxon>Pseudomonadota</taxon>
        <taxon>Gammaproteobacteria</taxon>
        <taxon>Enterobacterales</taxon>
        <taxon>Hafniaceae</taxon>
        <taxon>Edwardsiella</taxon>
    </lineage>
</organism>
<name>ALF_EDWI9</name>
<dbReference type="EC" id="4.1.2.13"/>
<dbReference type="EMBL" id="AF037440">
    <property type="protein sequence ID" value="AAB92572.1"/>
    <property type="molecule type" value="Genomic_DNA"/>
</dbReference>
<dbReference type="EMBL" id="CP001600">
    <property type="protein sequence ID" value="ACR70504.1"/>
    <property type="molecule type" value="Genomic_DNA"/>
</dbReference>
<dbReference type="SMR" id="O52402"/>
<dbReference type="STRING" id="67780.B6E78_08520"/>
<dbReference type="KEGG" id="eic:NT01EI_3367"/>
<dbReference type="PATRIC" id="fig|634503.3.peg.2993"/>
<dbReference type="HOGENOM" id="CLU_036923_0_0_6"/>
<dbReference type="OrthoDB" id="9803995at2"/>
<dbReference type="SABIO-RK" id="O52402"/>
<dbReference type="UniPathway" id="UPA00109">
    <property type="reaction ID" value="UER00183"/>
</dbReference>
<dbReference type="Proteomes" id="UP000001485">
    <property type="component" value="Chromosome"/>
</dbReference>
<dbReference type="GO" id="GO:0005829">
    <property type="term" value="C:cytosol"/>
    <property type="evidence" value="ECO:0007669"/>
    <property type="project" value="TreeGrafter"/>
</dbReference>
<dbReference type="GO" id="GO:0004332">
    <property type="term" value="F:fructose-bisphosphate aldolase activity"/>
    <property type="evidence" value="ECO:0007669"/>
    <property type="project" value="UniProtKB-EC"/>
</dbReference>
<dbReference type="GO" id="GO:0008270">
    <property type="term" value="F:zinc ion binding"/>
    <property type="evidence" value="ECO:0007669"/>
    <property type="project" value="InterPro"/>
</dbReference>
<dbReference type="GO" id="GO:0006094">
    <property type="term" value="P:gluconeogenesis"/>
    <property type="evidence" value="ECO:0007669"/>
    <property type="project" value="TreeGrafter"/>
</dbReference>
<dbReference type="GO" id="GO:0006096">
    <property type="term" value="P:glycolytic process"/>
    <property type="evidence" value="ECO:0007669"/>
    <property type="project" value="UniProtKB-UniPathway"/>
</dbReference>
<dbReference type="CDD" id="cd00946">
    <property type="entry name" value="FBP_aldolase_IIA"/>
    <property type="match status" value="1"/>
</dbReference>
<dbReference type="FunFam" id="3.20.20.70:FF:000013">
    <property type="entry name" value="Class II fructose-bisphosphate aldolase"/>
    <property type="match status" value="1"/>
</dbReference>
<dbReference type="Gene3D" id="3.20.20.70">
    <property type="entry name" value="Aldolase class I"/>
    <property type="match status" value="1"/>
</dbReference>
<dbReference type="InterPro" id="IPR013785">
    <property type="entry name" value="Aldolase_TIM"/>
</dbReference>
<dbReference type="InterPro" id="IPR000771">
    <property type="entry name" value="FBA_II"/>
</dbReference>
<dbReference type="InterPro" id="IPR006411">
    <property type="entry name" value="Fruct_bisP_bact"/>
</dbReference>
<dbReference type="NCBIfam" id="TIGR00167">
    <property type="entry name" value="cbbA"/>
    <property type="match status" value="1"/>
</dbReference>
<dbReference type="NCBIfam" id="TIGR01520">
    <property type="entry name" value="FruBisAldo_II_A"/>
    <property type="match status" value="1"/>
</dbReference>
<dbReference type="NCBIfam" id="NF006628">
    <property type="entry name" value="PRK09197.1"/>
    <property type="match status" value="1"/>
</dbReference>
<dbReference type="PANTHER" id="PTHR30559:SF0">
    <property type="entry name" value="FRUCTOSE-BISPHOSPHATE ALDOLASE"/>
    <property type="match status" value="1"/>
</dbReference>
<dbReference type="PANTHER" id="PTHR30559">
    <property type="entry name" value="FRUCTOSE-BISPHOSPHATE ALDOLASE CLASS 2"/>
    <property type="match status" value="1"/>
</dbReference>
<dbReference type="Pfam" id="PF01116">
    <property type="entry name" value="F_bP_aldolase"/>
    <property type="match status" value="1"/>
</dbReference>
<dbReference type="PIRSF" id="PIRSF001359">
    <property type="entry name" value="F_bP_aldolase_II"/>
    <property type="match status" value="1"/>
</dbReference>
<dbReference type="SUPFAM" id="SSF51569">
    <property type="entry name" value="Aldolase"/>
    <property type="match status" value="1"/>
</dbReference>
<dbReference type="PROSITE" id="PS00602">
    <property type="entry name" value="ALDOLASE_CLASS_II_1"/>
    <property type="match status" value="1"/>
</dbReference>
<dbReference type="PROSITE" id="PS00806">
    <property type="entry name" value="ALDOLASE_CLASS_II_2"/>
    <property type="match status" value="1"/>
</dbReference>
<proteinExistence type="inferred from homology"/>
<evidence type="ECO:0000250" key="1"/>
<evidence type="ECO:0000305" key="2"/>
<comment type="function">
    <text evidence="1">Catalyzes the aldol condensation of dihydroxyacetone phosphate (DHAP or glycerone-phosphate) with glyceraldehyde 3-phosphate (G3P) to form fructose 1,6-bisphosphate (FBP) in gluconeogenesis and the reverse reaction in glycolysis.</text>
</comment>
<comment type="catalytic activity">
    <reaction>
        <text>beta-D-fructose 1,6-bisphosphate = D-glyceraldehyde 3-phosphate + dihydroxyacetone phosphate</text>
        <dbReference type="Rhea" id="RHEA:14729"/>
        <dbReference type="ChEBI" id="CHEBI:32966"/>
        <dbReference type="ChEBI" id="CHEBI:57642"/>
        <dbReference type="ChEBI" id="CHEBI:59776"/>
        <dbReference type="EC" id="4.1.2.13"/>
    </reaction>
</comment>
<comment type="cofactor">
    <cofactor evidence="1">
        <name>Zn(2+)</name>
        <dbReference type="ChEBI" id="CHEBI:29105"/>
    </cofactor>
    <text evidence="1">Binds 2 Zn(2+) ions per subunit. One is catalytic and the other provides a structural contribution.</text>
</comment>
<comment type="pathway">
    <text>Carbohydrate degradation; glycolysis; D-glyceraldehyde 3-phosphate and glycerone phosphate from D-glucose: step 4/4.</text>
</comment>
<comment type="similarity">
    <text evidence="2">Belongs to the class II fructose-bisphosphate aldolase family.</text>
</comment>